<organism>
    <name type="scientific">Shewanella sp. (strain ANA-3)</name>
    <dbReference type="NCBI Taxonomy" id="94122"/>
    <lineage>
        <taxon>Bacteria</taxon>
        <taxon>Pseudomonadati</taxon>
        <taxon>Pseudomonadota</taxon>
        <taxon>Gammaproteobacteria</taxon>
        <taxon>Alteromonadales</taxon>
        <taxon>Shewanellaceae</taxon>
        <taxon>Shewanella</taxon>
    </lineage>
</organism>
<accession>A0KZS6</accession>
<feature type="chain" id="PRO_0000300948" description="Glutamate-1-semialdehyde 2,1-aminomutase">
    <location>
        <begin position="1"/>
        <end position="430"/>
    </location>
</feature>
<feature type="modified residue" description="N6-(pyridoxal phosphate)lysine" evidence="1">
    <location>
        <position position="265"/>
    </location>
</feature>
<reference key="1">
    <citation type="submission" date="2006-09" db="EMBL/GenBank/DDBJ databases">
        <title>Complete sequence of chromosome 1 of Shewanella sp. ANA-3.</title>
        <authorList>
            <person name="Copeland A."/>
            <person name="Lucas S."/>
            <person name="Lapidus A."/>
            <person name="Barry K."/>
            <person name="Detter J.C."/>
            <person name="Glavina del Rio T."/>
            <person name="Hammon N."/>
            <person name="Israni S."/>
            <person name="Dalin E."/>
            <person name="Tice H."/>
            <person name="Pitluck S."/>
            <person name="Chertkov O."/>
            <person name="Brettin T."/>
            <person name="Bruce D."/>
            <person name="Han C."/>
            <person name="Tapia R."/>
            <person name="Gilna P."/>
            <person name="Schmutz J."/>
            <person name="Larimer F."/>
            <person name="Land M."/>
            <person name="Hauser L."/>
            <person name="Kyrpides N."/>
            <person name="Kim E."/>
            <person name="Newman D."/>
            <person name="Salticov C."/>
            <person name="Konstantinidis K."/>
            <person name="Klappenback J."/>
            <person name="Tiedje J."/>
            <person name="Richardson P."/>
        </authorList>
    </citation>
    <scope>NUCLEOTIDE SEQUENCE [LARGE SCALE GENOMIC DNA]</scope>
    <source>
        <strain>ANA-3</strain>
    </source>
</reference>
<keyword id="KW-0963">Cytoplasm</keyword>
<keyword id="KW-0413">Isomerase</keyword>
<keyword id="KW-0627">Porphyrin biosynthesis</keyword>
<keyword id="KW-0663">Pyridoxal phosphate</keyword>
<dbReference type="EC" id="5.4.3.8" evidence="1"/>
<dbReference type="EMBL" id="CP000469">
    <property type="protein sequence ID" value="ABK49295.1"/>
    <property type="molecule type" value="Genomic_DNA"/>
</dbReference>
<dbReference type="RefSeq" id="WP_011717912.1">
    <property type="nucleotide sequence ID" value="NC_008577.1"/>
</dbReference>
<dbReference type="SMR" id="A0KZS6"/>
<dbReference type="STRING" id="94122.Shewana3_3071"/>
<dbReference type="KEGG" id="shn:Shewana3_3071"/>
<dbReference type="eggNOG" id="COG0001">
    <property type="taxonomic scope" value="Bacteria"/>
</dbReference>
<dbReference type="HOGENOM" id="CLU_016922_1_5_6"/>
<dbReference type="OrthoDB" id="9801052at2"/>
<dbReference type="UniPathway" id="UPA00251">
    <property type="reaction ID" value="UER00317"/>
</dbReference>
<dbReference type="Proteomes" id="UP000002589">
    <property type="component" value="Chromosome"/>
</dbReference>
<dbReference type="GO" id="GO:0005737">
    <property type="term" value="C:cytoplasm"/>
    <property type="evidence" value="ECO:0007669"/>
    <property type="project" value="UniProtKB-SubCell"/>
</dbReference>
<dbReference type="GO" id="GO:0042286">
    <property type="term" value="F:glutamate-1-semialdehyde 2,1-aminomutase activity"/>
    <property type="evidence" value="ECO:0007669"/>
    <property type="project" value="UniProtKB-UniRule"/>
</dbReference>
<dbReference type="GO" id="GO:0030170">
    <property type="term" value="F:pyridoxal phosphate binding"/>
    <property type="evidence" value="ECO:0007669"/>
    <property type="project" value="InterPro"/>
</dbReference>
<dbReference type="GO" id="GO:0008483">
    <property type="term" value="F:transaminase activity"/>
    <property type="evidence" value="ECO:0007669"/>
    <property type="project" value="InterPro"/>
</dbReference>
<dbReference type="GO" id="GO:0006782">
    <property type="term" value="P:protoporphyrinogen IX biosynthetic process"/>
    <property type="evidence" value="ECO:0007669"/>
    <property type="project" value="UniProtKB-UniRule"/>
</dbReference>
<dbReference type="CDD" id="cd00610">
    <property type="entry name" value="OAT_like"/>
    <property type="match status" value="1"/>
</dbReference>
<dbReference type="FunFam" id="3.40.640.10:FF:000021">
    <property type="entry name" value="Glutamate-1-semialdehyde 2,1-aminomutase"/>
    <property type="match status" value="1"/>
</dbReference>
<dbReference type="Gene3D" id="3.90.1150.10">
    <property type="entry name" value="Aspartate Aminotransferase, domain 1"/>
    <property type="match status" value="1"/>
</dbReference>
<dbReference type="Gene3D" id="3.40.640.10">
    <property type="entry name" value="Type I PLP-dependent aspartate aminotransferase-like (Major domain)"/>
    <property type="match status" value="1"/>
</dbReference>
<dbReference type="HAMAP" id="MF_00375">
    <property type="entry name" value="HemL_aminotrans_3"/>
    <property type="match status" value="1"/>
</dbReference>
<dbReference type="InterPro" id="IPR004639">
    <property type="entry name" value="4pyrrol_synth_GluAld_NH2Trfase"/>
</dbReference>
<dbReference type="InterPro" id="IPR005814">
    <property type="entry name" value="Aminotrans_3"/>
</dbReference>
<dbReference type="InterPro" id="IPR049704">
    <property type="entry name" value="Aminotrans_3_PPA_site"/>
</dbReference>
<dbReference type="InterPro" id="IPR015424">
    <property type="entry name" value="PyrdxlP-dep_Trfase"/>
</dbReference>
<dbReference type="InterPro" id="IPR015421">
    <property type="entry name" value="PyrdxlP-dep_Trfase_major"/>
</dbReference>
<dbReference type="InterPro" id="IPR015422">
    <property type="entry name" value="PyrdxlP-dep_Trfase_small"/>
</dbReference>
<dbReference type="NCBIfam" id="TIGR00713">
    <property type="entry name" value="hemL"/>
    <property type="match status" value="1"/>
</dbReference>
<dbReference type="NCBIfam" id="NF000818">
    <property type="entry name" value="PRK00062.1"/>
    <property type="match status" value="1"/>
</dbReference>
<dbReference type="PANTHER" id="PTHR43713">
    <property type="entry name" value="GLUTAMATE-1-SEMIALDEHYDE 2,1-AMINOMUTASE"/>
    <property type="match status" value="1"/>
</dbReference>
<dbReference type="PANTHER" id="PTHR43713:SF3">
    <property type="entry name" value="GLUTAMATE-1-SEMIALDEHYDE 2,1-AMINOMUTASE 1, CHLOROPLASTIC-RELATED"/>
    <property type="match status" value="1"/>
</dbReference>
<dbReference type="Pfam" id="PF00202">
    <property type="entry name" value="Aminotran_3"/>
    <property type="match status" value="1"/>
</dbReference>
<dbReference type="SUPFAM" id="SSF53383">
    <property type="entry name" value="PLP-dependent transferases"/>
    <property type="match status" value="1"/>
</dbReference>
<dbReference type="PROSITE" id="PS00600">
    <property type="entry name" value="AA_TRANSFER_CLASS_3"/>
    <property type="match status" value="1"/>
</dbReference>
<gene>
    <name evidence="1" type="primary">hemL</name>
    <name type="ordered locus">Shewana3_3071</name>
</gene>
<sequence length="430" mass="46171">MTRSEALFEQAKKTIPGGVNSPVRAFNGVGGSPLFIEKADGAYIYDADGKAYIDYVGSWGPMILGHNHPKIREAVLAAVHNGLSFGAPTELEVQMAEKVIAMVPSIEQVRMVSSGTEATMSAIRLARGFTNRDKILKFEGCYHGHADCLLVKAGSGALTLGQPSSPGIPEDFAKHTLTAVYNDLDSVRSLFEQYPTEISCIIIEPVAGNMNCIPPIPGFLEGLRAMCDEFGALLIIDEVMTGFRVSRSGAQGHYGVTPDLTTLGKVIGGGMPVGAFGGRKEVMQFIAPTGPVYQAGTLSGNPIAMSAGLAQMEALCEEGLYEALSAKTKRIAEGFKAAADKHGIPMAINYVGGMFGFFFTEQEQITRFDQVTKCNIEHFRTFYHGMLDEGVYLAPSAYEAGFLSMAHGEEELRLTLEAADRVLGRMKAAM</sequence>
<evidence type="ECO:0000255" key="1">
    <source>
        <dbReference type="HAMAP-Rule" id="MF_00375"/>
    </source>
</evidence>
<name>GSA_SHESA</name>
<proteinExistence type="inferred from homology"/>
<comment type="catalytic activity">
    <reaction evidence="1">
        <text>(S)-4-amino-5-oxopentanoate = 5-aminolevulinate</text>
        <dbReference type="Rhea" id="RHEA:14265"/>
        <dbReference type="ChEBI" id="CHEBI:57501"/>
        <dbReference type="ChEBI" id="CHEBI:356416"/>
        <dbReference type="EC" id="5.4.3.8"/>
    </reaction>
</comment>
<comment type="cofactor">
    <cofactor evidence="1">
        <name>pyridoxal 5'-phosphate</name>
        <dbReference type="ChEBI" id="CHEBI:597326"/>
    </cofactor>
</comment>
<comment type="pathway">
    <text evidence="1">Porphyrin-containing compound metabolism; protoporphyrin-IX biosynthesis; 5-aminolevulinate from L-glutamyl-tRNA(Glu): step 2/2.</text>
</comment>
<comment type="subunit">
    <text evidence="1">Homodimer.</text>
</comment>
<comment type="subcellular location">
    <subcellularLocation>
        <location evidence="1">Cytoplasm</location>
    </subcellularLocation>
</comment>
<comment type="similarity">
    <text evidence="1">Belongs to the class-III pyridoxal-phosphate-dependent aminotransferase family. HemL subfamily.</text>
</comment>
<protein>
    <recommendedName>
        <fullName evidence="1">Glutamate-1-semialdehyde 2,1-aminomutase</fullName>
        <shortName evidence="1">GSA</shortName>
        <ecNumber evidence="1">5.4.3.8</ecNumber>
    </recommendedName>
    <alternativeName>
        <fullName evidence="1">Glutamate-1-semialdehyde aminotransferase</fullName>
        <shortName evidence="1">GSA-AT</shortName>
    </alternativeName>
</protein>